<dbReference type="EC" id="3.4.21.-"/>
<dbReference type="EMBL" id="AF227153">
    <property type="protein sequence ID" value="AAL77226.1"/>
    <property type="molecule type" value="mRNA"/>
</dbReference>
<dbReference type="SMR" id="Q8QHK3"/>
<dbReference type="MEROPS" id="S01.330"/>
<dbReference type="GO" id="GO:0005576">
    <property type="term" value="C:extracellular region"/>
    <property type="evidence" value="ECO:0007669"/>
    <property type="project" value="UniProtKB-SubCell"/>
</dbReference>
<dbReference type="GO" id="GO:0030141">
    <property type="term" value="C:secretory granule"/>
    <property type="evidence" value="ECO:0007669"/>
    <property type="project" value="TreeGrafter"/>
</dbReference>
<dbReference type="GO" id="GO:0004252">
    <property type="term" value="F:serine-type endopeptidase activity"/>
    <property type="evidence" value="ECO:0007669"/>
    <property type="project" value="InterPro"/>
</dbReference>
<dbReference type="GO" id="GO:0090729">
    <property type="term" value="F:toxin activity"/>
    <property type="evidence" value="ECO:0007669"/>
    <property type="project" value="UniProtKB-KW"/>
</dbReference>
<dbReference type="GO" id="GO:0006508">
    <property type="term" value="P:proteolysis"/>
    <property type="evidence" value="ECO:0007669"/>
    <property type="project" value="UniProtKB-KW"/>
</dbReference>
<dbReference type="CDD" id="cd00190">
    <property type="entry name" value="Tryp_SPc"/>
    <property type="match status" value="1"/>
</dbReference>
<dbReference type="FunFam" id="2.40.10.10:FF:000158">
    <property type="entry name" value="Thrombin-like enzyme saxthrombin"/>
    <property type="match status" value="1"/>
</dbReference>
<dbReference type="FunFam" id="2.40.10.10:FF:000153">
    <property type="entry name" value="Venom plasminogen activator TSV-PA"/>
    <property type="match status" value="1"/>
</dbReference>
<dbReference type="Gene3D" id="2.40.10.10">
    <property type="entry name" value="Trypsin-like serine proteases"/>
    <property type="match status" value="2"/>
</dbReference>
<dbReference type="InterPro" id="IPR009003">
    <property type="entry name" value="Peptidase_S1_PA"/>
</dbReference>
<dbReference type="InterPro" id="IPR043504">
    <property type="entry name" value="Peptidase_S1_PA_chymotrypsin"/>
</dbReference>
<dbReference type="InterPro" id="IPR001314">
    <property type="entry name" value="Peptidase_S1A"/>
</dbReference>
<dbReference type="InterPro" id="IPR001254">
    <property type="entry name" value="Trypsin_dom"/>
</dbReference>
<dbReference type="InterPro" id="IPR018114">
    <property type="entry name" value="TRYPSIN_HIS"/>
</dbReference>
<dbReference type="InterPro" id="IPR033116">
    <property type="entry name" value="TRYPSIN_SER"/>
</dbReference>
<dbReference type="PANTHER" id="PTHR24271:SF47">
    <property type="entry name" value="KALLIKREIN-1"/>
    <property type="match status" value="1"/>
</dbReference>
<dbReference type="PANTHER" id="PTHR24271">
    <property type="entry name" value="KALLIKREIN-RELATED"/>
    <property type="match status" value="1"/>
</dbReference>
<dbReference type="Pfam" id="PF00089">
    <property type="entry name" value="Trypsin"/>
    <property type="match status" value="1"/>
</dbReference>
<dbReference type="PRINTS" id="PR00722">
    <property type="entry name" value="CHYMOTRYPSIN"/>
</dbReference>
<dbReference type="SMART" id="SM00020">
    <property type="entry name" value="Tryp_SPc"/>
    <property type="match status" value="1"/>
</dbReference>
<dbReference type="SUPFAM" id="SSF50494">
    <property type="entry name" value="Trypsin-like serine proteases"/>
    <property type="match status" value="1"/>
</dbReference>
<dbReference type="PROSITE" id="PS50240">
    <property type="entry name" value="TRYPSIN_DOM"/>
    <property type="match status" value="1"/>
</dbReference>
<dbReference type="PROSITE" id="PS00134">
    <property type="entry name" value="TRYPSIN_HIS"/>
    <property type="match status" value="1"/>
</dbReference>
<dbReference type="PROSITE" id="PS00135">
    <property type="entry name" value="TRYPSIN_SER"/>
    <property type="match status" value="1"/>
</dbReference>
<organism>
    <name type="scientific">Crotalus atrox</name>
    <name type="common">Western diamondback rattlesnake</name>
    <dbReference type="NCBI Taxonomy" id="8730"/>
    <lineage>
        <taxon>Eukaryota</taxon>
        <taxon>Metazoa</taxon>
        <taxon>Chordata</taxon>
        <taxon>Craniata</taxon>
        <taxon>Vertebrata</taxon>
        <taxon>Euteleostomi</taxon>
        <taxon>Lepidosauria</taxon>
        <taxon>Squamata</taxon>
        <taxon>Bifurcata</taxon>
        <taxon>Unidentata</taxon>
        <taxon>Episquamata</taxon>
        <taxon>Toxicofera</taxon>
        <taxon>Serpentes</taxon>
        <taxon>Colubroidea</taxon>
        <taxon>Viperidae</taxon>
        <taxon>Crotalinae</taxon>
        <taxon>Crotalus</taxon>
    </lineage>
</organism>
<accession>Q8QHK3</accession>
<proteinExistence type="evidence at protein level"/>
<feature type="signal peptide" evidence="2">
    <location>
        <begin position="1"/>
        <end position="18"/>
    </location>
</feature>
<feature type="propeptide" id="PRO_0000296304" evidence="4">
    <location>
        <begin position="19"/>
        <end position="24"/>
    </location>
</feature>
<feature type="chain" id="PRO_5000057802" description="Snake venom serine protease catroxase-1">
    <location>
        <begin position="25"/>
        <end position="262"/>
    </location>
</feature>
<feature type="domain" description="Peptidase S1" evidence="3">
    <location>
        <begin position="25"/>
        <end position="250"/>
    </location>
</feature>
<feature type="active site" description="Charge relay system" evidence="1">
    <location>
        <position position="64"/>
    </location>
</feature>
<feature type="active site" description="Charge relay system" evidence="1">
    <location>
        <position position="109"/>
    </location>
</feature>
<feature type="active site" description="Charge relay system" evidence="1">
    <location>
        <position position="205"/>
    </location>
</feature>
<feature type="glycosylation site" description="N-linked (GlcNAc...) asparagine" evidence="2">
    <location>
        <position position="102"/>
    </location>
</feature>
<feature type="glycosylation site" description="N-linked (GlcNAc...) asparagine" evidence="2">
    <location>
        <position position="169"/>
    </location>
</feature>
<feature type="disulfide bond" evidence="3">
    <location>
        <begin position="31"/>
        <end position="162"/>
    </location>
</feature>
<feature type="disulfide bond" evidence="3">
    <location>
        <begin position="49"/>
        <end position="65"/>
    </location>
</feature>
<feature type="disulfide bond" evidence="3">
    <location>
        <begin position="97"/>
        <end position="257"/>
    </location>
</feature>
<feature type="disulfide bond" evidence="3">
    <location>
        <begin position="141"/>
        <end position="211"/>
    </location>
</feature>
<feature type="disulfide bond" evidence="3">
    <location>
        <begin position="173"/>
        <end position="190"/>
    </location>
</feature>
<feature type="disulfide bond" evidence="3">
    <location>
        <begin position="201"/>
        <end position="226"/>
    </location>
</feature>
<protein>
    <recommendedName>
        <fullName>Snake venom serine protease catroxase-1</fullName>
        <shortName>SVSP</shortName>
        <ecNumber>3.4.21.-</ecNumber>
    </recommendedName>
    <alternativeName>
        <fullName>Catroxase I</fullName>
    </alternativeName>
</protein>
<comment type="function">
    <text evidence="1">Snake venom serine protease that may act in the hemostasis system of the prey.</text>
</comment>
<comment type="subunit">
    <text evidence="1">Monomer.</text>
</comment>
<comment type="subcellular location">
    <subcellularLocation>
        <location>Secreted</location>
    </subcellularLocation>
</comment>
<comment type="tissue specificity">
    <text>Expressed by the venom gland.</text>
</comment>
<comment type="mass spectrometry" mass="25930.0" method="Unknown" evidence="4">
    <text>Average mass.</text>
</comment>
<comment type="similarity">
    <text evidence="3">Belongs to the peptidase S1 family. Snake venom subfamily.</text>
</comment>
<keyword id="KW-0903">Direct protein sequencing</keyword>
<keyword id="KW-1015">Disulfide bond</keyword>
<keyword id="KW-0325">Glycoprotein</keyword>
<keyword id="KW-1199">Hemostasis impairing toxin</keyword>
<keyword id="KW-0378">Hydrolase</keyword>
<keyword id="KW-0645">Protease</keyword>
<keyword id="KW-0964">Secreted</keyword>
<keyword id="KW-0720">Serine protease</keyword>
<keyword id="KW-0732">Signal</keyword>
<keyword id="KW-0800">Toxin</keyword>
<keyword id="KW-0865">Zymogen</keyword>
<sequence length="262" mass="28625">MVLIRVLANLLILQLSYAQKSSEPIIGGDECNRNEHRFLALVSSDGNQCGGTLINEEWVLTAAHCEGNKMKIHLGVHSKKVPNKDKQTRVAKEKFFCVSSKNYTFWDKDIMLIRLDRPVSNSEHIAPLSLPSSPPSVGSVCRIMGWGTISPTKVILPDVPHCVNINLLNYSVCRAAYPEYGLPATSRTLCAGILEGGKDTCVGDSGGPLICNGQFQGIASWGSPNCGYVREPALYTKVFDHLDWIQSIIAGNTDATCPFVNF</sequence>
<reference key="1">
    <citation type="submission" date="2000-01" db="EMBL/GenBank/DDBJ databases">
        <title>Catroxase I and II, the serine proteases of Crotalus atrox venom: cloning, complete sequencing and functional characterization.</title>
        <authorList>
            <person name="Tsai I.-H."/>
            <person name="Hsu J.-C."/>
            <person name="Wang Y.-M."/>
        </authorList>
    </citation>
    <scope>NUCLEOTIDE SEQUENCE [MRNA]</scope>
    <source>
        <tissue>Venom gland</tissue>
    </source>
</reference>
<reference key="2">
    <citation type="journal article" date="2009" name="J. Proteome Res.">
        <title>Exploring the venom proteome of the western diamondback rattlesnake, Crotalus atrox, via snake venomics and combinatorial peptide ligand library approaches.</title>
        <authorList>
            <person name="Calvete J.J."/>
            <person name="Fasoli E."/>
            <person name="Sanz L."/>
            <person name="Boschetti E."/>
            <person name="Righetti P.G."/>
        </authorList>
    </citation>
    <scope>PROTEIN SEQUENCE OF 25-46 AND 143-187</scope>
    <scope>MASS SPECTROMETRY</scope>
    <source>
        <tissue>Venom</tissue>
    </source>
</reference>
<name>VSP1_CROAT</name>
<evidence type="ECO:0000250" key="1"/>
<evidence type="ECO:0000255" key="2"/>
<evidence type="ECO:0000255" key="3">
    <source>
        <dbReference type="PROSITE-ProRule" id="PRU00274"/>
    </source>
</evidence>
<evidence type="ECO:0000269" key="4">
    <source>
    </source>
</evidence>